<name>PPID_CANAL</name>
<gene>
    <name type="primary">CPR6</name>
    <name type="ordered locus">CAALFM_CR10670WA</name>
    <name type="ORF">CaO19.7654</name>
</gene>
<sequence>MTATPVYFDISCNGKPKGRVVFKLYDDVVPKTAANFRSLCTGDKGISPKSGKPLSYKDSIFHRVIKDFMCQGGDFTAPSDHLGTGGESIYGEKFEDENFKLNHNKPFLLSMANSGPNTNGSQFFITTVPTPHLDGKHVVFGEVIEGKSIVRQLERSEKGANDRPVEDWKIADCGELPANYEPVASGADDGTGDTYEEILTDNDTIDINNPQSVFAAVSKIKDIGTKLLKEGKLEKSYEKYTKANSYLNDYFPEGLSPEDLSTLHGLKLSCYLNAALVALKLKHGKDAIAAANNALEVEQIDDKSKTKALYRKGMGYILVKDEEQAQKILEEALELEPNDAAIQKGLQEAKHNIKLRRDKQKKAMAKFFS</sequence>
<proteinExistence type="inferred from homology"/>
<reference key="1">
    <citation type="journal article" date="2004" name="Proc. Natl. Acad. Sci. U.S.A.">
        <title>The diploid genome sequence of Candida albicans.</title>
        <authorList>
            <person name="Jones T."/>
            <person name="Federspiel N.A."/>
            <person name="Chibana H."/>
            <person name="Dungan J."/>
            <person name="Kalman S."/>
            <person name="Magee B.B."/>
            <person name="Newport G."/>
            <person name="Thorstenson Y.R."/>
            <person name="Agabian N."/>
            <person name="Magee P.T."/>
            <person name="Davis R.W."/>
            <person name="Scherer S."/>
        </authorList>
    </citation>
    <scope>NUCLEOTIDE SEQUENCE [LARGE SCALE GENOMIC DNA]</scope>
    <source>
        <strain>SC5314 / ATCC MYA-2876</strain>
    </source>
</reference>
<reference key="2">
    <citation type="journal article" date="2007" name="Genome Biol.">
        <title>Assembly of the Candida albicans genome into sixteen supercontigs aligned on the eight chromosomes.</title>
        <authorList>
            <person name="van het Hoog M."/>
            <person name="Rast T.J."/>
            <person name="Martchenko M."/>
            <person name="Grindle S."/>
            <person name="Dignard D."/>
            <person name="Hogues H."/>
            <person name="Cuomo C."/>
            <person name="Berriman M."/>
            <person name="Scherer S."/>
            <person name="Magee B.B."/>
            <person name="Whiteway M."/>
            <person name="Chibana H."/>
            <person name="Nantel A."/>
            <person name="Magee P.T."/>
        </authorList>
    </citation>
    <scope>GENOME REANNOTATION</scope>
    <source>
        <strain>SC5314 / ATCC MYA-2876</strain>
    </source>
</reference>
<reference key="3">
    <citation type="journal article" date="2013" name="Genome Biol.">
        <title>Assembly of a phased diploid Candida albicans genome facilitates allele-specific measurements and provides a simple model for repeat and indel structure.</title>
        <authorList>
            <person name="Muzzey D."/>
            <person name="Schwartz K."/>
            <person name="Weissman J.S."/>
            <person name="Sherlock G."/>
        </authorList>
    </citation>
    <scope>NUCLEOTIDE SEQUENCE [LARGE SCALE GENOMIC DNA]</scope>
    <scope>GENOME REANNOTATION</scope>
    <source>
        <strain>SC5314 / ATCC MYA-2876</strain>
    </source>
</reference>
<reference key="4">
    <citation type="submission" date="2006-02" db="UniProtKB">
        <authorList>
            <person name="Pemberton T.J."/>
        </authorList>
    </citation>
    <scope>IDENTIFICATION OF PROBABLE INITIATION SITE</scope>
</reference>
<keyword id="KW-0963">Cytoplasm</keyword>
<keyword id="KW-0413">Isomerase</keyword>
<keyword id="KW-1185">Reference proteome</keyword>
<keyword id="KW-0677">Repeat</keyword>
<keyword id="KW-0697">Rotamase</keyword>
<keyword id="KW-0802">TPR repeat</keyword>
<evidence type="ECO:0000250" key="1"/>
<evidence type="ECO:0000255" key="2">
    <source>
        <dbReference type="PROSITE-ProRule" id="PRU00156"/>
    </source>
</evidence>
<evidence type="ECO:0000305" key="3"/>
<accession>Q5ACI8</accession>
<accession>A0A1D8PU97</accession>
<comment type="function">
    <text evidence="1">PPIases accelerate the folding of proteins. It catalyzes the cis-trans isomerization of proline imidic peptide bonds in oligopeptides (By similarity).</text>
</comment>
<comment type="catalytic activity">
    <reaction>
        <text>[protein]-peptidylproline (omega=180) = [protein]-peptidylproline (omega=0)</text>
        <dbReference type="Rhea" id="RHEA:16237"/>
        <dbReference type="Rhea" id="RHEA-COMP:10747"/>
        <dbReference type="Rhea" id="RHEA-COMP:10748"/>
        <dbReference type="ChEBI" id="CHEBI:83833"/>
        <dbReference type="ChEBI" id="CHEBI:83834"/>
        <dbReference type="EC" id="5.2.1.8"/>
    </reaction>
</comment>
<comment type="subcellular location">
    <subcellularLocation>
        <location evidence="1">Cytoplasm</location>
    </subcellularLocation>
</comment>
<comment type="similarity">
    <text evidence="3">Belongs to the cyclophilin-type PPIase family. PPIase D subfamily.</text>
</comment>
<protein>
    <recommendedName>
        <fullName>Peptidyl-prolyl cis-trans isomerase D</fullName>
        <shortName>PPIase D</shortName>
        <ecNumber>5.2.1.8</ecNumber>
    </recommendedName>
    <alternativeName>
        <fullName>Rotamase D</fullName>
    </alternativeName>
</protein>
<feature type="chain" id="PRO_0000232944" description="Peptidyl-prolyl cis-trans isomerase D">
    <location>
        <begin position="1"/>
        <end position="369"/>
    </location>
</feature>
<feature type="domain" description="PPIase cyclophilin-type" evidence="2">
    <location>
        <begin position="7"/>
        <end position="175"/>
    </location>
</feature>
<feature type="repeat" description="TPR 1">
    <location>
        <begin position="217"/>
        <end position="250"/>
    </location>
</feature>
<feature type="repeat" description="TPR 2">
    <location>
        <begin position="268"/>
        <end position="301"/>
    </location>
</feature>
<feature type="repeat" description="TPR 3">
    <location>
        <begin position="306"/>
        <end position="339"/>
    </location>
</feature>
<organism>
    <name type="scientific">Candida albicans (strain SC5314 / ATCC MYA-2876)</name>
    <name type="common">Yeast</name>
    <dbReference type="NCBI Taxonomy" id="237561"/>
    <lineage>
        <taxon>Eukaryota</taxon>
        <taxon>Fungi</taxon>
        <taxon>Dikarya</taxon>
        <taxon>Ascomycota</taxon>
        <taxon>Saccharomycotina</taxon>
        <taxon>Pichiomycetes</taxon>
        <taxon>Debaryomycetaceae</taxon>
        <taxon>Candida/Lodderomyces clade</taxon>
        <taxon>Candida</taxon>
    </lineage>
</organism>
<dbReference type="EC" id="5.2.1.8"/>
<dbReference type="EMBL" id="CP017630">
    <property type="protein sequence ID" value="AOW31715.1"/>
    <property type="molecule type" value="Genomic_DNA"/>
</dbReference>
<dbReference type="RefSeq" id="XP_719413.2">
    <property type="nucleotide sequence ID" value="XM_714320.2"/>
</dbReference>
<dbReference type="SMR" id="Q5ACI8"/>
<dbReference type="BioGRID" id="1222114">
    <property type="interactions" value="5"/>
</dbReference>
<dbReference type="FunCoup" id="Q5ACI8">
    <property type="interactions" value="1140"/>
</dbReference>
<dbReference type="STRING" id="237561.Q5ACI8"/>
<dbReference type="EnsemblFungi" id="CR_10670W_A-T">
    <property type="protein sequence ID" value="CR_10670W_A-T-p1"/>
    <property type="gene ID" value="CR_10670W_A"/>
</dbReference>
<dbReference type="GeneID" id="3639020"/>
<dbReference type="KEGG" id="cal:CAALFM_CR10670WA"/>
<dbReference type="CGD" id="CAL0000193303">
    <property type="gene designation" value="CPR6"/>
</dbReference>
<dbReference type="VEuPathDB" id="FungiDB:CR_10670W_A"/>
<dbReference type="eggNOG" id="KOG0546">
    <property type="taxonomic scope" value="Eukaryota"/>
</dbReference>
<dbReference type="HOGENOM" id="CLU_012062_37_0_1"/>
<dbReference type="InParanoid" id="Q5ACI8"/>
<dbReference type="OMA" id="EMEQNCN"/>
<dbReference type="OrthoDB" id="193499at2759"/>
<dbReference type="Proteomes" id="UP000000559">
    <property type="component" value="Chromosome R"/>
</dbReference>
<dbReference type="GO" id="GO:0005737">
    <property type="term" value="C:cytoplasm"/>
    <property type="evidence" value="ECO:0000318"/>
    <property type="project" value="GO_Central"/>
</dbReference>
<dbReference type="GO" id="GO:0043231">
    <property type="term" value="C:intracellular membrane-bounded organelle"/>
    <property type="evidence" value="ECO:0000318"/>
    <property type="project" value="GO_Central"/>
</dbReference>
<dbReference type="GO" id="GO:0016018">
    <property type="term" value="F:cyclosporin A binding"/>
    <property type="evidence" value="ECO:0000318"/>
    <property type="project" value="GO_Central"/>
</dbReference>
<dbReference type="GO" id="GO:0003755">
    <property type="term" value="F:peptidyl-prolyl cis-trans isomerase activity"/>
    <property type="evidence" value="ECO:0000318"/>
    <property type="project" value="GO_Central"/>
</dbReference>
<dbReference type="GO" id="GO:0043022">
    <property type="term" value="F:ribosome binding"/>
    <property type="evidence" value="ECO:0007669"/>
    <property type="project" value="EnsemblFungi"/>
</dbReference>
<dbReference type="GO" id="GO:0051082">
    <property type="term" value="F:unfolded protein binding"/>
    <property type="evidence" value="ECO:0007669"/>
    <property type="project" value="EnsemblFungi"/>
</dbReference>
<dbReference type="GO" id="GO:0006457">
    <property type="term" value="P:protein folding"/>
    <property type="evidence" value="ECO:0000318"/>
    <property type="project" value="GO_Central"/>
</dbReference>
<dbReference type="GO" id="GO:0042026">
    <property type="term" value="P:protein refolding"/>
    <property type="evidence" value="ECO:0007669"/>
    <property type="project" value="EnsemblFungi"/>
</dbReference>
<dbReference type="CDD" id="cd01926">
    <property type="entry name" value="cyclophilin_ABH_like"/>
    <property type="match status" value="1"/>
</dbReference>
<dbReference type="FunFam" id="2.40.100.10:FF:000045">
    <property type="entry name" value="Peptidyl-prolyl cis-trans isomerase D"/>
    <property type="match status" value="1"/>
</dbReference>
<dbReference type="FunFam" id="1.25.40.10:FF:000029">
    <property type="entry name" value="peptidyl-prolyl cis-trans isomerase D"/>
    <property type="match status" value="1"/>
</dbReference>
<dbReference type="Gene3D" id="2.40.100.10">
    <property type="entry name" value="Cyclophilin-like"/>
    <property type="match status" value="1"/>
</dbReference>
<dbReference type="Gene3D" id="1.25.40.10">
    <property type="entry name" value="Tetratricopeptide repeat domain"/>
    <property type="match status" value="1"/>
</dbReference>
<dbReference type="InterPro" id="IPR029000">
    <property type="entry name" value="Cyclophilin-like_dom_sf"/>
</dbReference>
<dbReference type="InterPro" id="IPR020892">
    <property type="entry name" value="Cyclophilin-type_PPIase_CS"/>
</dbReference>
<dbReference type="InterPro" id="IPR002130">
    <property type="entry name" value="Cyclophilin-type_PPIase_dom"/>
</dbReference>
<dbReference type="InterPro" id="IPR011990">
    <property type="entry name" value="TPR-like_helical_dom_sf"/>
</dbReference>
<dbReference type="InterPro" id="IPR019734">
    <property type="entry name" value="TPR_rpt"/>
</dbReference>
<dbReference type="PANTHER" id="PTHR11071">
    <property type="entry name" value="PEPTIDYL-PROLYL CIS-TRANS ISOMERASE"/>
    <property type="match status" value="1"/>
</dbReference>
<dbReference type="PANTHER" id="PTHR11071:SF561">
    <property type="entry name" value="PEPTIDYL-PROLYL CIS-TRANS ISOMERASE D-RELATED"/>
    <property type="match status" value="1"/>
</dbReference>
<dbReference type="Pfam" id="PF00160">
    <property type="entry name" value="Pro_isomerase"/>
    <property type="match status" value="1"/>
</dbReference>
<dbReference type="PRINTS" id="PR00153">
    <property type="entry name" value="CSAPPISMRASE"/>
</dbReference>
<dbReference type="SMART" id="SM00028">
    <property type="entry name" value="TPR"/>
    <property type="match status" value="3"/>
</dbReference>
<dbReference type="SUPFAM" id="SSF50891">
    <property type="entry name" value="Cyclophilin-like"/>
    <property type="match status" value="1"/>
</dbReference>
<dbReference type="SUPFAM" id="SSF48452">
    <property type="entry name" value="TPR-like"/>
    <property type="match status" value="1"/>
</dbReference>
<dbReference type="PROSITE" id="PS00170">
    <property type="entry name" value="CSA_PPIASE_1"/>
    <property type="match status" value="1"/>
</dbReference>
<dbReference type="PROSITE" id="PS50072">
    <property type="entry name" value="CSA_PPIASE_2"/>
    <property type="match status" value="1"/>
</dbReference>
<dbReference type="PROSITE" id="PS50005">
    <property type="entry name" value="TPR"/>
    <property type="match status" value="2"/>
</dbReference>
<dbReference type="PROSITE" id="PS50293">
    <property type="entry name" value="TPR_REGION"/>
    <property type="match status" value="1"/>
</dbReference>